<proteinExistence type="inferred from homology"/>
<sequence length="313" mass="33842">MDVGIKGFGAYAPEKVVENTYFESFLETSDEWISQMTGIKERRWAGEDEETSDMAYQASLKAIEDAGIEASEIDMIIVATSTGDFPFPTVANILQERLGIGKVASMDQLAACSGFMYSMINAKQFVQSGDYKNILVVGVDKLSKITDFTDRSTAILFGDGAGAVVIGEVSEGRGILSYELGSDGSGAKHLYLNPENGKIFMNGREVFKFAVRIMGEASNNAVAKANLTADDVDMFVPHQANIRIMESARERLGIPKEKMSVSVDRFGNTSAASIPLSIGQELENGRIKDDDVLVLVGFGGGLTWGAVTLRWGK</sequence>
<accession>Q49WB6</accession>
<dbReference type="EC" id="2.3.1.180" evidence="1"/>
<dbReference type="EMBL" id="AP008934">
    <property type="protein sequence ID" value="BAE18943.1"/>
    <property type="molecule type" value="Genomic_DNA"/>
</dbReference>
<dbReference type="RefSeq" id="WP_011303494.1">
    <property type="nucleotide sequence ID" value="NZ_CP035294.1"/>
</dbReference>
<dbReference type="SMR" id="Q49WB6"/>
<dbReference type="GeneID" id="3616453"/>
<dbReference type="KEGG" id="ssp:SSP1798"/>
<dbReference type="PATRIC" id="fig|342451.11.peg.1794"/>
<dbReference type="eggNOG" id="COG0332">
    <property type="taxonomic scope" value="Bacteria"/>
</dbReference>
<dbReference type="HOGENOM" id="CLU_039592_3_1_9"/>
<dbReference type="OrthoDB" id="9815506at2"/>
<dbReference type="UniPathway" id="UPA00094"/>
<dbReference type="Proteomes" id="UP000006371">
    <property type="component" value="Chromosome"/>
</dbReference>
<dbReference type="GO" id="GO:0005737">
    <property type="term" value="C:cytoplasm"/>
    <property type="evidence" value="ECO:0007669"/>
    <property type="project" value="UniProtKB-SubCell"/>
</dbReference>
<dbReference type="GO" id="GO:0004315">
    <property type="term" value="F:3-oxoacyl-[acyl-carrier-protein] synthase activity"/>
    <property type="evidence" value="ECO:0007669"/>
    <property type="project" value="InterPro"/>
</dbReference>
<dbReference type="GO" id="GO:0033818">
    <property type="term" value="F:beta-ketoacyl-acyl-carrier-protein synthase III activity"/>
    <property type="evidence" value="ECO:0007669"/>
    <property type="project" value="UniProtKB-UniRule"/>
</dbReference>
<dbReference type="GO" id="GO:0006633">
    <property type="term" value="P:fatty acid biosynthetic process"/>
    <property type="evidence" value="ECO:0007669"/>
    <property type="project" value="UniProtKB-UniRule"/>
</dbReference>
<dbReference type="CDD" id="cd00830">
    <property type="entry name" value="KAS_III"/>
    <property type="match status" value="1"/>
</dbReference>
<dbReference type="FunFam" id="3.40.47.10:FF:000004">
    <property type="entry name" value="3-oxoacyl-[acyl-carrier-protein] synthase 3"/>
    <property type="match status" value="1"/>
</dbReference>
<dbReference type="Gene3D" id="3.40.47.10">
    <property type="match status" value="1"/>
</dbReference>
<dbReference type="HAMAP" id="MF_01815">
    <property type="entry name" value="FabH"/>
    <property type="match status" value="1"/>
</dbReference>
<dbReference type="InterPro" id="IPR013747">
    <property type="entry name" value="ACP_syn_III_C"/>
</dbReference>
<dbReference type="InterPro" id="IPR013751">
    <property type="entry name" value="ACP_syn_III_N"/>
</dbReference>
<dbReference type="InterPro" id="IPR004655">
    <property type="entry name" value="FabH"/>
</dbReference>
<dbReference type="InterPro" id="IPR016039">
    <property type="entry name" value="Thiolase-like"/>
</dbReference>
<dbReference type="NCBIfam" id="TIGR00747">
    <property type="entry name" value="fabH"/>
    <property type="match status" value="1"/>
</dbReference>
<dbReference type="NCBIfam" id="NF006829">
    <property type="entry name" value="PRK09352.1"/>
    <property type="match status" value="1"/>
</dbReference>
<dbReference type="PANTHER" id="PTHR43091">
    <property type="entry name" value="3-OXOACYL-[ACYL-CARRIER-PROTEIN] SYNTHASE"/>
    <property type="match status" value="1"/>
</dbReference>
<dbReference type="PANTHER" id="PTHR43091:SF1">
    <property type="entry name" value="BETA-KETOACYL-[ACYL-CARRIER-PROTEIN] SYNTHASE III, CHLOROPLASTIC"/>
    <property type="match status" value="1"/>
</dbReference>
<dbReference type="Pfam" id="PF08545">
    <property type="entry name" value="ACP_syn_III"/>
    <property type="match status" value="1"/>
</dbReference>
<dbReference type="Pfam" id="PF08541">
    <property type="entry name" value="ACP_syn_III_C"/>
    <property type="match status" value="1"/>
</dbReference>
<dbReference type="SUPFAM" id="SSF53901">
    <property type="entry name" value="Thiolase-like"/>
    <property type="match status" value="1"/>
</dbReference>
<gene>
    <name evidence="1" type="primary">fabH</name>
    <name type="ordered locus">SSP1798</name>
</gene>
<protein>
    <recommendedName>
        <fullName evidence="1">Beta-ketoacyl-[acyl-carrier-protein] synthase III</fullName>
        <shortName evidence="1">Beta-ketoacyl-ACP synthase III</shortName>
        <shortName evidence="1">KAS III</shortName>
        <ecNumber evidence="1">2.3.1.180</ecNumber>
    </recommendedName>
    <alternativeName>
        <fullName evidence="1">3-oxoacyl-[acyl-carrier-protein] synthase 3</fullName>
    </alternativeName>
    <alternativeName>
        <fullName evidence="1">3-oxoacyl-[acyl-carrier-protein] synthase III</fullName>
    </alternativeName>
</protein>
<organism>
    <name type="scientific">Staphylococcus saprophyticus subsp. saprophyticus (strain ATCC 15305 / DSM 20229 / NCIMB 8711 / NCTC 7292 / S-41)</name>
    <dbReference type="NCBI Taxonomy" id="342451"/>
    <lineage>
        <taxon>Bacteria</taxon>
        <taxon>Bacillati</taxon>
        <taxon>Bacillota</taxon>
        <taxon>Bacilli</taxon>
        <taxon>Bacillales</taxon>
        <taxon>Staphylococcaceae</taxon>
        <taxon>Staphylococcus</taxon>
    </lineage>
</organism>
<comment type="function">
    <text evidence="1">Catalyzes the condensation reaction of fatty acid synthesis by the addition to an acyl acceptor of two carbons from malonyl-ACP. Catalyzes the first condensation reaction which initiates fatty acid synthesis and may therefore play a role in governing the total rate of fatty acid production. Possesses both acetoacetyl-ACP synthase and acetyl transacylase activities. Its substrate specificity determines the biosynthesis of branched-chain and/or straight-chain of fatty acids.</text>
</comment>
<comment type="catalytic activity">
    <reaction evidence="1">
        <text>malonyl-[ACP] + acetyl-CoA + H(+) = 3-oxobutanoyl-[ACP] + CO2 + CoA</text>
        <dbReference type="Rhea" id="RHEA:12080"/>
        <dbReference type="Rhea" id="RHEA-COMP:9623"/>
        <dbReference type="Rhea" id="RHEA-COMP:9625"/>
        <dbReference type="ChEBI" id="CHEBI:15378"/>
        <dbReference type="ChEBI" id="CHEBI:16526"/>
        <dbReference type="ChEBI" id="CHEBI:57287"/>
        <dbReference type="ChEBI" id="CHEBI:57288"/>
        <dbReference type="ChEBI" id="CHEBI:78449"/>
        <dbReference type="ChEBI" id="CHEBI:78450"/>
        <dbReference type="EC" id="2.3.1.180"/>
    </reaction>
</comment>
<comment type="pathway">
    <text evidence="1">Lipid metabolism; fatty acid biosynthesis.</text>
</comment>
<comment type="subunit">
    <text evidence="1">Homodimer.</text>
</comment>
<comment type="subcellular location">
    <subcellularLocation>
        <location evidence="1">Cytoplasm</location>
    </subcellularLocation>
</comment>
<comment type="domain">
    <text evidence="1">The last Arg residue of the ACP-binding site is essential for the weak association between ACP/AcpP and FabH.</text>
</comment>
<comment type="similarity">
    <text evidence="1">Belongs to the thiolase-like superfamily. FabH family.</text>
</comment>
<feature type="chain" id="PRO_0000110478" description="Beta-ketoacyl-[acyl-carrier-protein] synthase III">
    <location>
        <begin position="1"/>
        <end position="313"/>
    </location>
</feature>
<feature type="region of interest" description="ACP-binding" evidence="1">
    <location>
        <begin position="239"/>
        <end position="243"/>
    </location>
</feature>
<feature type="active site" evidence="1">
    <location>
        <position position="112"/>
    </location>
</feature>
<feature type="active site" evidence="1">
    <location>
        <position position="238"/>
    </location>
</feature>
<feature type="active site" evidence="1">
    <location>
        <position position="268"/>
    </location>
</feature>
<name>FABH_STAS1</name>
<evidence type="ECO:0000255" key="1">
    <source>
        <dbReference type="HAMAP-Rule" id="MF_01815"/>
    </source>
</evidence>
<reference key="1">
    <citation type="journal article" date="2005" name="Proc. Natl. Acad. Sci. U.S.A.">
        <title>Whole genome sequence of Staphylococcus saprophyticus reveals the pathogenesis of uncomplicated urinary tract infection.</title>
        <authorList>
            <person name="Kuroda M."/>
            <person name="Yamashita A."/>
            <person name="Hirakawa H."/>
            <person name="Kumano M."/>
            <person name="Morikawa K."/>
            <person name="Higashide M."/>
            <person name="Maruyama A."/>
            <person name="Inose Y."/>
            <person name="Matoba K."/>
            <person name="Toh H."/>
            <person name="Kuhara S."/>
            <person name="Hattori M."/>
            <person name="Ohta T."/>
        </authorList>
    </citation>
    <scope>NUCLEOTIDE SEQUENCE [LARGE SCALE GENOMIC DNA]</scope>
    <source>
        <strain>ATCC 15305 / DSM 20229 / NCIMB 8711 / NCTC 7292 / S-41</strain>
    </source>
</reference>
<keyword id="KW-0012">Acyltransferase</keyword>
<keyword id="KW-0963">Cytoplasm</keyword>
<keyword id="KW-0275">Fatty acid biosynthesis</keyword>
<keyword id="KW-0276">Fatty acid metabolism</keyword>
<keyword id="KW-0444">Lipid biosynthesis</keyword>
<keyword id="KW-0443">Lipid metabolism</keyword>
<keyword id="KW-0511">Multifunctional enzyme</keyword>
<keyword id="KW-1185">Reference proteome</keyword>
<keyword id="KW-0808">Transferase</keyword>